<evidence type="ECO:0000255" key="1">
    <source>
        <dbReference type="HAMAP-Rule" id="MF_00460"/>
    </source>
</evidence>
<feature type="chain" id="PRO_1000060333" description="Protein RnfH">
    <location>
        <begin position="1"/>
        <end position="96"/>
    </location>
</feature>
<organism>
    <name type="scientific">Escherichia coli O9:H4 (strain HS)</name>
    <dbReference type="NCBI Taxonomy" id="331112"/>
    <lineage>
        <taxon>Bacteria</taxon>
        <taxon>Pseudomonadati</taxon>
        <taxon>Pseudomonadota</taxon>
        <taxon>Gammaproteobacteria</taxon>
        <taxon>Enterobacterales</taxon>
        <taxon>Enterobacteriaceae</taxon>
        <taxon>Escherichia</taxon>
    </lineage>
</organism>
<reference key="1">
    <citation type="journal article" date="2008" name="J. Bacteriol.">
        <title>The pangenome structure of Escherichia coli: comparative genomic analysis of E. coli commensal and pathogenic isolates.</title>
        <authorList>
            <person name="Rasko D.A."/>
            <person name="Rosovitz M.J."/>
            <person name="Myers G.S.A."/>
            <person name="Mongodin E.F."/>
            <person name="Fricke W.F."/>
            <person name="Gajer P."/>
            <person name="Crabtree J."/>
            <person name="Sebaihia M."/>
            <person name="Thomson N.R."/>
            <person name="Chaudhuri R."/>
            <person name="Henderson I.R."/>
            <person name="Sperandio V."/>
            <person name="Ravel J."/>
        </authorList>
    </citation>
    <scope>NUCLEOTIDE SEQUENCE [LARGE SCALE GENOMIC DNA]</scope>
    <source>
        <strain>HS</strain>
    </source>
</reference>
<gene>
    <name evidence="1" type="primary">rnfH</name>
    <name type="ordered locus">EcHS_A2776</name>
</gene>
<accession>A8A3C4</accession>
<name>RNFH_ECOHS</name>
<sequence length="96" mass="10789">MPGKIAVEVAYALPEKQYLQRVTLQEGATVEEAIRASGLLELRTDIDLTKNKVGIYSRPAKLSDSVHDGDRVEIYRPLIADPKELRRQRAEKSANK</sequence>
<comment type="similarity">
    <text evidence="1">Belongs to the UPF0125 (RnfH) family.</text>
</comment>
<proteinExistence type="inferred from homology"/>
<protein>
    <recommendedName>
        <fullName evidence="1">Protein RnfH</fullName>
    </recommendedName>
</protein>
<dbReference type="EMBL" id="CP000802">
    <property type="protein sequence ID" value="ABV07028.1"/>
    <property type="molecule type" value="Genomic_DNA"/>
</dbReference>
<dbReference type="RefSeq" id="WP_001117838.1">
    <property type="nucleotide sequence ID" value="NC_009800.1"/>
</dbReference>
<dbReference type="SMR" id="A8A3C4"/>
<dbReference type="KEGG" id="ecx:EcHS_A2776"/>
<dbReference type="HOGENOM" id="CLU_150721_1_0_6"/>
<dbReference type="Gene3D" id="3.10.20.280">
    <property type="entry name" value="RnfH-like"/>
    <property type="match status" value="1"/>
</dbReference>
<dbReference type="HAMAP" id="MF_00460">
    <property type="entry name" value="UPF0125_RnfH"/>
    <property type="match status" value="1"/>
</dbReference>
<dbReference type="InterPro" id="IPR016155">
    <property type="entry name" value="Mopterin_synth/thiamin_S_b"/>
</dbReference>
<dbReference type="InterPro" id="IPR005346">
    <property type="entry name" value="RnfH"/>
</dbReference>
<dbReference type="InterPro" id="IPR037021">
    <property type="entry name" value="RnfH_sf"/>
</dbReference>
<dbReference type="NCBIfam" id="NF002490">
    <property type="entry name" value="PRK01777.1"/>
    <property type="match status" value="1"/>
</dbReference>
<dbReference type="PANTHER" id="PTHR37483">
    <property type="entry name" value="UPF0125 PROTEIN RATB"/>
    <property type="match status" value="1"/>
</dbReference>
<dbReference type="PANTHER" id="PTHR37483:SF1">
    <property type="entry name" value="UPF0125 PROTEIN RATB"/>
    <property type="match status" value="1"/>
</dbReference>
<dbReference type="Pfam" id="PF03658">
    <property type="entry name" value="Ub-RnfH"/>
    <property type="match status" value="1"/>
</dbReference>
<dbReference type="SUPFAM" id="SSF54285">
    <property type="entry name" value="MoaD/ThiS"/>
    <property type="match status" value="1"/>
</dbReference>